<comment type="function">
    <text evidence="1">Catalyzes the ATP-dependent transfer of a sulfur to tRNA to produce 4-thiouridine in position 8 of tRNAs, which functions as a near-UV photosensor. Also catalyzes the transfer of sulfur to the sulfur carrier protein ThiS, forming ThiS-thiocarboxylate. This is a step in the synthesis of thiazole, in the thiamine biosynthesis pathway. The sulfur is donated as persulfide by IscS.</text>
</comment>
<comment type="catalytic activity">
    <reaction evidence="1">
        <text>[ThiI sulfur-carrier protein]-S-sulfanyl-L-cysteine + a uridine in tRNA + 2 reduced [2Fe-2S]-[ferredoxin] + ATP + H(+) = [ThiI sulfur-carrier protein]-L-cysteine + a 4-thiouridine in tRNA + 2 oxidized [2Fe-2S]-[ferredoxin] + AMP + diphosphate</text>
        <dbReference type="Rhea" id="RHEA:24176"/>
        <dbReference type="Rhea" id="RHEA-COMP:10000"/>
        <dbReference type="Rhea" id="RHEA-COMP:10001"/>
        <dbReference type="Rhea" id="RHEA-COMP:13337"/>
        <dbReference type="Rhea" id="RHEA-COMP:13338"/>
        <dbReference type="Rhea" id="RHEA-COMP:13339"/>
        <dbReference type="Rhea" id="RHEA-COMP:13340"/>
        <dbReference type="ChEBI" id="CHEBI:15378"/>
        <dbReference type="ChEBI" id="CHEBI:29950"/>
        <dbReference type="ChEBI" id="CHEBI:30616"/>
        <dbReference type="ChEBI" id="CHEBI:33019"/>
        <dbReference type="ChEBI" id="CHEBI:33737"/>
        <dbReference type="ChEBI" id="CHEBI:33738"/>
        <dbReference type="ChEBI" id="CHEBI:61963"/>
        <dbReference type="ChEBI" id="CHEBI:65315"/>
        <dbReference type="ChEBI" id="CHEBI:136798"/>
        <dbReference type="ChEBI" id="CHEBI:456215"/>
        <dbReference type="EC" id="2.8.1.4"/>
    </reaction>
</comment>
<comment type="catalytic activity">
    <reaction evidence="1">
        <text>[ThiS sulfur-carrier protein]-C-terminal Gly-Gly-AMP + S-sulfanyl-L-cysteinyl-[cysteine desulfurase] + AH2 = [ThiS sulfur-carrier protein]-C-terminal-Gly-aminoethanethioate + L-cysteinyl-[cysteine desulfurase] + A + AMP + 2 H(+)</text>
        <dbReference type="Rhea" id="RHEA:43340"/>
        <dbReference type="Rhea" id="RHEA-COMP:12157"/>
        <dbReference type="Rhea" id="RHEA-COMP:12158"/>
        <dbReference type="Rhea" id="RHEA-COMP:12910"/>
        <dbReference type="Rhea" id="RHEA-COMP:19908"/>
        <dbReference type="ChEBI" id="CHEBI:13193"/>
        <dbReference type="ChEBI" id="CHEBI:15378"/>
        <dbReference type="ChEBI" id="CHEBI:17499"/>
        <dbReference type="ChEBI" id="CHEBI:29950"/>
        <dbReference type="ChEBI" id="CHEBI:61963"/>
        <dbReference type="ChEBI" id="CHEBI:90618"/>
        <dbReference type="ChEBI" id="CHEBI:232372"/>
        <dbReference type="ChEBI" id="CHEBI:456215"/>
    </reaction>
</comment>
<comment type="pathway">
    <text evidence="1">Cofactor biosynthesis; thiamine diphosphate biosynthesis.</text>
</comment>
<comment type="subcellular location">
    <subcellularLocation>
        <location evidence="1">Cytoplasm</location>
    </subcellularLocation>
</comment>
<comment type="similarity">
    <text evidence="1">Belongs to the ThiI family.</text>
</comment>
<accession>Q92BB6</accession>
<reference key="1">
    <citation type="journal article" date="2001" name="Science">
        <title>Comparative genomics of Listeria species.</title>
        <authorList>
            <person name="Glaser P."/>
            <person name="Frangeul L."/>
            <person name="Buchrieser C."/>
            <person name="Rusniok C."/>
            <person name="Amend A."/>
            <person name="Baquero F."/>
            <person name="Berche P."/>
            <person name="Bloecker H."/>
            <person name="Brandt P."/>
            <person name="Chakraborty T."/>
            <person name="Charbit A."/>
            <person name="Chetouani F."/>
            <person name="Couve E."/>
            <person name="de Daruvar A."/>
            <person name="Dehoux P."/>
            <person name="Domann E."/>
            <person name="Dominguez-Bernal G."/>
            <person name="Duchaud E."/>
            <person name="Durant L."/>
            <person name="Dussurget O."/>
            <person name="Entian K.-D."/>
            <person name="Fsihi H."/>
            <person name="Garcia-del Portillo F."/>
            <person name="Garrido P."/>
            <person name="Gautier L."/>
            <person name="Goebel W."/>
            <person name="Gomez-Lopez N."/>
            <person name="Hain T."/>
            <person name="Hauf J."/>
            <person name="Jackson D."/>
            <person name="Jones L.-M."/>
            <person name="Kaerst U."/>
            <person name="Kreft J."/>
            <person name="Kuhn M."/>
            <person name="Kunst F."/>
            <person name="Kurapkat G."/>
            <person name="Madueno E."/>
            <person name="Maitournam A."/>
            <person name="Mata Vicente J."/>
            <person name="Ng E."/>
            <person name="Nedjari H."/>
            <person name="Nordsiek G."/>
            <person name="Novella S."/>
            <person name="de Pablos B."/>
            <person name="Perez-Diaz J.-C."/>
            <person name="Purcell R."/>
            <person name="Remmel B."/>
            <person name="Rose M."/>
            <person name="Schlueter T."/>
            <person name="Simoes N."/>
            <person name="Tierrez A."/>
            <person name="Vazquez-Boland J.-A."/>
            <person name="Voss H."/>
            <person name="Wehland J."/>
            <person name="Cossart P."/>
        </authorList>
    </citation>
    <scope>NUCLEOTIDE SEQUENCE [LARGE SCALE GENOMIC DNA]</scope>
    <source>
        <strain>ATCC BAA-680 / CLIP 11262</strain>
    </source>
</reference>
<proteinExistence type="inferred from homology"/>
<organism>
    <name type="scientific">Listeria innocua serovar 6a (strain ATCC BAA-680 / CLIP 11262)</name>
    <dbReference type="NCBI Taxonomy" id="272626"/>
    <lineage>
        <taxon>Bacteria</taxon>
        <taxon>Bacillati</taxon>
        <taxon>Bacillota</taxon>
        <taxon>Bacilli</taxon>
        <taxon>Bacillales</taxon>
        <taxon>Listeriaceae</taxon>
        <taxon>Listeria</taxon>
    </lineage>
</organism>
<name>THII_LISIN</name>
<evidence type="ECO:0000255" key="1">
    <source>
        <dbReference type="HAMAP-Rule" id="MF_00021"/>
    </source>
</evidence>
<gene>
    <name evidence="1" type="primary">thiI</name>
    <name type="ordered locus">lin1634</name>
</gene>
<keyword id="KW-0067">ATP-binding</keyword>
<keyword id="KW-0963">Cytoplasm</keyword>
<keyword id="KW-0547">Nucleotide-binding</keyword>
<keyword id="KW-0694">RNA-binding</keyword>
<keyword id="KW-0784">Thiamine biosynthesis</keyword>
<keyword id="KW-0808">Transferase</keyword>
<keyword id="KW-0820">tRNA-binding</keyword>
<feature type="chain" id="PRO_0000154845" description="Probable tRNA sulfurtransferase">
    <location>
        <begin position="1"/>
        <end position="403"/>
    </location>
</feature>
<feature type="domain" description="THUMP" evidence="1">
    <location>
        <begin position="60"/>
        <end position="165"/>
    </location>
</feature>
<feature type="binding site" evidence="1">
    <location>
        <begin position="183"/>
        <end position="184"/>
    </location>
    <ligand>
        <name>ATP</name>
        <dbReference type="ChEBI" id="CHEBI:30616"/>
    </ligand>
</feature>
<feature type="binding site" evidence="1">
    <location>
        <begin position="208"/>
        <end position="209"/>
    </location>
    <ligand>
        <name>ATP</name>
        <dbReference type="ChEBI" id="CHEBI:30616"/>
    </ligand>
</feature>
<feature type="binding site" evidence="1">
    <location>
        <position position="265"/>
    </location>
    <ligand>
        <name>ATP</name>
        <dbReference type="ChEBI" id="CHEBI:30616"/>
    </ligand>
</feature>
<feature type="binding site" evidence="1">
    <location>
        <position position="287"/>
    </location>
    <ligand>
        <name>ATP</name>
        <dbReference type="ChEBI" id="CHEBI:30616"/>
    </ligand>
</feature>
<feature type="binding site" evidence="1">
    <location>
        <position position="296"/>
    </location>
    <ligand>
        <name>ATP</name>
        <dbReference type="ChEBI" id="CHEBI:30616"/>
    </ligand>
</feature>
<sequence>MEFDRMLIRYGELSTKGKNRKQFVTRLAQNVKRAMKDLPEVRIHGERDRMYIILNGADYQLAEERLKPIFGIQSFSPAVRVNLDLDEVKAAALSLVQDAHEENGTFKVAARRSHREFPLDSNEINQEIGAHVLQNIEDLTVNVKNPDVKLTIDVRKEGVFLSCRTILGAAGLPVGSSGRAMLMLSGGIDSPVAGYLAQKRGVEIEAVHFHSPPYTSEQAKQKAIDLAGKLAKYSGQVQMHIVPFTEIQEVIKQQIPESVIMTVTRRMMLRITDELRRKRNGLAIVNGESLGQVASQTLESMLAINAVTATPIIRPVVAMDKNEIIQIAQKIDTYNLSVQPFEDCCTIFTPPSPKTKPKLDKIEHYESFTDFDALILKALENVETIAVNVAENAEIKDEFADLF</sequence>
<dbReference type="EC" id="2.8.1.4" evidence="1"/>
<dbReference type="EMBL" id="AL596169">
    <property type="protein sequence ID" value="CAC96865.1"/>
    <property type="molecule type" value="Genomic_DNA"/>
</dbReference>
<dbReference type="PIR" id="AI1636">
    <property type="entry name" value="AI1636"/>
</dbReference>
<dbReference type="RefSeq" id="WP_010991623.1">
    <property type="nucleotide sequence ID" value="NC_003212.1"/>
</dbReference>
<dbReference type="SMR" id="Q92BB6"/>
<dbReference type="STRING" id="272626.gene:17565965"/>
<dbReference type="GeneID" id="93235016"/>
<dbReference type="KEGG" id="lin:lin1634"/>
<dbReference type="eggNOG" id="COG0301">
    <property type="taxonomic scope" value="Bacteria"/>
</dbReference>
<dbReference type="HOGENOM" id="CLU_037952_4_0_9"/>
<dbReference type="OrthoDB" id="9773948at2"/>
<dbReference type="UniPathway" id="UPA00060"/>
<dbReference type="Proteomes" id="UP000002513">
    <property type="component" value="Chromosome"/>
</dbReference>
<dbReference type="GO" id="GO:0005829">
    <property type="term" value="C:cytosol"/>
    <property type="evidence" value="ECO:0007669"/>
    <property type="project" value="TreeGrafter"/>
</dbReference>
<dbReference type="GO" id="GO:0005524">
    <property type="term" value="F:ATP binding"/>
    <property type="evidence" value="ECO:0007669"/>
    <property type="project" value="UniProtKB-UniRule"/>
</dbReference>
<dbReference type="GO" id="GO:0004810">
    <property type="term" value="F:CCA tRNA nucleotidyltransferase activity"/>
    <property type="evidence" value="ECO:0007669"/>
    <property type="project" value="InterPro"/>
</dbReference>
<dbReference type="GO" id="GO:0000049">
    <property type="term" value="F:tRNA binding"/>
    <property type="evidence" value="ECO:0007669"/>
    <property type="project" value="UniProtKB-UniRule"/>
</dbReference>
<dbReference type="GO" id="GO:0140741">
    <property type="term" value="F:tRNA-uracil-4 sulfurtransferase activity"/>
    <property type="evidence" value="ECO:0007669"/>
    <property type="project" value="UniProtKB-EC"/>
</dbReference>
<dbReference type="GO" id="GO:0009228">
    <property type="term" value="P:thiamine biosynthetic process"/>
    <property type="evidence" value="ECO:0007669"/>
    <property type="project" value="UniProtKB-KW"/>
</dbReference>
<dbReference type="GO" id="GO:0009229">
    <property type="term" value="P:thiamine diphosphate biosynthetic process"/>
    <property type="evidence" value="ECO:0007669"/>
    <property type="project" value="UniProtKB-UniRule"/>
</dbReference>
<dbReference type="GO" id="GO:0052837">
    <property type="term" value="P:thiazole biosynthetic process"/>
    <property type="evidence" value="ECO:0007669"/>
    <property type="project" value="TreeGrafter"/>
</dbReference>
<dbReference type="GO" id="GO:0002937">
    <property type="term" value="P:tRNA 4-thiouridine biosynthesis"/>
    <property type="evidence" value="ECO:0007669"/>
    <property type="project" value="TreeGrafter"/>
</dbReference>
<dbReference type="CDD" id="cd01712">
    <property type="entry name" value="PPase_ThiI"/>
    <property type="match status" value="1"/>
</dbReference>
<dbReference type="CDD" id="cd11716">
    <property type="entry name" value="THUMP_ThiI"/>
    <property type="match status" value="1"/>
</dbReference>
<dbReference type="FunFam" id="3.30.2130.30:FF:000011">
    <property type="entry name" value="Probable tRNA sulfurtransferase"/>
    <property type="match status" value="1"/>
</dbReference>
<dbReference type="FunFam" id="3.40.50.620:FF:000053">
    <property type="entry name" value="Probable tRNA sulfurtransferase"/>
    <property type="match status" value="1"/>
</dbReference>
<dbReference type="Gene3D" id="3.30.2130.30">
    <property type="match status" value="1"/>
</dbReference>
<dbReference type="Gene3D" id="3.40.50.620">
    <property type="entry name" value="HUPs"/>
    <property type="match status" value="1"/>
</dbReference>
<dbReference type="HAMAP" id="MF_00021">
    <property type="entry name" value="ThiI"/>
    <property type="match status" value="1"/>
</dbReference>
<dbReference type="InterPro" id="IPR014729">
    <property type="entry name" value="Rossmann-like_a/b/a_fold"/>
</dbReference>
<dbReference type="InterPro" id="IPR020536">
    <property type="entry name" value="ThiI_AANH"/>
</dbReference>
<dbReference type="InterPro" id="IPR054173">
    <property type="entry name" value="ThiI_fer"/>
</dbReference>
<dbReference type="InterPro" id="IPR049961">
    <property type="entry name" value="ThiI_N"/>
</dbReference>
<dbReference type="InterPro" id="IPR004114">
    <property type="entry name" value="THUMP_dom"/>
</dbReference>
<dbReference type="InterPro" id="IPR049962">
    <property type="entry name" value="THUMP_ThiI"/>
</dbReference>
<dbReference type="InterPro" id="IPR003720">
    <property type="entry name" value="tRNA_STrfase"/>
</dbReference>
<dbReference type="InterPro" id="IPR050102">
    <property type="entry name" value="tRNA_sulfurtransferase_ThiI"/>
</dbReference>
<dbReference type="NCBIfam" id="TIGR00342">
    <property type="entry name" value="tRNA uracil 4-sulfurtransferase ThiI"/>
    <property type="match status" value="1"/>
</dbReference>
<dbReference type="PANTHER" id="PTHR43209">
    <property type="entry name" value="TRNA SULFURTRANSFERASE"/>
    <property type="match status" value="1"/>
</dbReference>
<dbReference type="PANTHER" id="PTHR43209:SF1">
    <property type="entry name" value="TRNA SULFURTRANSFERASE"/>
    <property type="match status" value="1"/>
</dbReference>
<dbReference type="Pfam" id="PF02568">
    <property type="entry name" value="ThiI"/>
    <property type="match status" value="1"/>
</dbReference>
<dbReference type="Pfam" id="PF22025">
    <property type="entry name" value="ThiI_fer"/>
    <property type="match status" value="1"/>
</dbReference>
<dbReference type="Pfam" id="PF02926">
    <property type="entry name" value="THUMP"/>
    <property type="match status" value="1"/>
</dbReference>
<dbReference type="SMART" id="SM00981">
    <property type="entry name" value="THUMP"/>
    <property type="match status" value="1"/>
</dbReference>
<dbReference type="SUPFAM" id="SSF52402">
    <property type="entry name" value="Adenine nucleotide alpha hydrolases-like"/>
    <property type="match status" value="1"/>
</dbReference>
<dbReference type="SUPFAM" id="SSF143437">
    <property type="entry name" value="THUMP domain-like"/>
    <property type="match status" value="1"/>
</dbReference>
<dbReference type="PROSITE" id="PS51165">
    <property type="entry name" value="THUMP"/>
    <property type="match status" value="1"/>
</dbReference>
<protein>
    <recommendedName>
        <fullName evidence="1">Probable tRNA sulfurtransferase</fullName>
        <ecNumber evidence="1">2.8.1.4</ecNumber>
    </recommendedName>
    <alternativeName>
        <fullName evidence="1">Sulfur carrier protein ThiS sulfurtransferase</fullName>
    </alternativeName>
    <alternativeName>
        <fullName evidence="1">Thiamine biosynthesis protein ThiI</fullName>
    </alternativeName>
    <alternativeName>
        <fullName evidence="1">tRNA 4-thiouridine synthase</fullName>
    </alternativeName>
</protein>